<protein>
    <recommendedName>
        <fullName evidence="1">UDP-N-acetylenolpyruvoylglucosamine reductase</fullName>
        <ecNumber evidence="1">1.3.1.98</ecNumber>
    </recommendedName>
    <alternativeName>
        <fullName evidence="1">UDP-N-acetylmuramate dehydrogenase</fullName>
    </alternativeName>
</protein>
<dbReference type="EC" id="1.3.1.98" evidence="1"/>
<dbReference type="EMBL" id="AE017321">
    <property type="protein sequence ID" value="AAW71366.1"/>
    <property type="molecule type" value="Genomic_DNA"/>
</dbReference>
<dbReference type="RefSeq" id="WP_011256975.1">
    <property type="nucleotide sequence ID" value="NC_006833.1"/>
</dbReference>
<dbReference type="SMR" id="Q5GRK8"/>
<dbReference type="STRING" id="292805.Wbm0778"/>
<dbReference type="KEGG" id="wbm:Wbm0778"/>
<dbReference type="eggNOG" id="COG0812">
    <property type="taxonomic scope" value="Bacteria"/>
</dbReference>
<dbReference type="HOGENOM" id="CLU_035304_1_0_5"/>
<dbReference type="UniPathway" id="UPA00219"/>
<dbReference type="Proteomes" id="UP000000534">
    <property type="component" value="Chromosome"/>
</dbReference>
<dbReference type="GO" id="GO:0005829">
    <property type="term" value="C:cytosol"/>
    <property type="evidence" value="ECO:0007669"/>
    <property type="project" value="TreeGrafter"/>
</dbReference>
<dbReference type="GO" id="GO:0071949">
    <property type="term" value="F:FAD binding"/>
    <property type="evidence" value="ECO:0007669"/>
    <property type="project" value="InterPro"/>
</dbReference>
<dbReference type="GO" id="GO:0008762">
    <property type="term" value="F:UDP-N-acetylmuramate dehydrogenase activity"/>
    <property type="evidence" value="ECO:0007669"/>
    <property type="project" value="UniProtKB-UniRule"/>
</dbReference>
<dbReference type="GO" id="GO:0051301">
    <property type="term" value="P:cell division"/>
    <property type="evidence" value="ECO:0007669"/>
    <property type="project" value="UniProtKB-KW"/>
</dbReference>
<dbReference type="GO" id="GO:0071555">
    <property type="term" value="P:cell wall organization"/>
    <property type="evidence" value="ECO:0007669"/>
    <property type="project" value="UniProtKB-KW"/>
</dbReference>
<dbReference type="GO" id="GO:0009252">
    <property type="term" value="P:peptidoglycan biosynthetic process"/>
    <property type="evidence" value="ECO:0007669"/>
    <property type="project" value="UniProtKB-UniRule"/>
</dbReference>
<dbReference type="GO" id="GO:0008360">
    <property type="term" value="P:regulation of cell shape"/>
    <property type="evidence" value="ECO:0007669"/>
    <property type="project" value="UniProtKB-KW"/>
</dbReference>
<dbReference type="Gene3D" id="3.30.465.10">
    <property type="match status" value="1"/>
</dbReference>
<dbReference type="Gene3D" id="3.90.78.10">
    <property type="entry name" value="UDP-N-acetylenolpyruvoylglucosamine reductase, C-terminal domain"/>
    <property type="match status" value="1"/>
</dbReference>
<dbReference type="Gene3D" id="3.30.43.10">
    <property type="entry name" value="Uridine Diphospho-n-acetylenolpyruvylglucosamine Reductase, domain 2"/>
    <property type="match status" value="1"/>
</dbReference>
<dbReference type="HAMAP" id="MF_00037">
    <property type="entry name" value="MurB"/>
    <property type="match status" value="1"/>
</dbReference>
<dbReference type="InterPro" id="IPR016166">
    <property type="entry name" value="FAD-bd_PCMH"/>
</dbReference>
<dbReference type="InterPro" id="IPR036318">
    <property type="entry name" value="FAD-bd_PCMH-like_sf"/>
</dbReference>
<dbReference type="InterPro" id="IPR016167">
    <property type="entry name" value="FAD-bd_PCMH_sub1"/>
</dbReference>
<dbReference type="InterPro" id="IPR016169">
    <property type="entry name" value="FAD-bd_PCMH_sub2"/>
</dbReference>
<dbReference type="InterPro" id="IPR003170">
    <property type="entry name" value="MurB"/>
</dbReference>
<dbReference type="InterPro" id="IPR011601">
    <property type="entry name" value="MurB_C"/>
</dbReference>
<dbReference type="InterPro" id="IPR036635">
    <property type="entry name" value="MurB_C_sf"/>
</dbReference>
<dbReference type="InterPro" id="IPR006094">
    <property type="entry name" value="Oxid_FAD_bind_N"/>
</dbReference>
<dbReference type="NCBIfam" id="TIGR00179">
    <property type="entry name" value="murB"/>
    <property type="match status" value="1"/>
</dbReference>
<dbReference type="NCBIfam" id="NF010480">
    <property type="entry name" value="PRK13905.1"/>
    <property type="match status" value="1"/>
</dbReference>
<dbReference type="PANTHER" id="PTHR21071">
    <property type="entry name" value="UDP-N-ACETYLENOLPYRUVOYLGLUCOSAMINE REDUCTASE"/>
    <property type="match status" value="1"/>
</dbReference>
<dbReference type="PANTHER" id="PTHR21071:SF4">
    <property type="entry name" value="UDP-N-ACETYLENOLPYRUVOYLGLUCOSAMINE REDUCTASE"/>
    <property type="match status" value="1"/>
</dbReference>
<dbReference type="Pfam" id="PF01565">
    <property type="entry name" value="FAD_binding_4"/>
    <property type="match status" value="1"/>
</dbReference>
<dbReference type="Pfam" id="PF02873">
    <property type="entry name" value="MurB_C"/>
    <property type="match status" value="1"/>
</dbReference>
<dbReference type="SUPFAM" id="SSF56176">
    <property type="entry name" value="FAD-binding/transporter-associated domain-like"/>
    <property type="match status" value="1"/>
</dbReference>
<dbReference type="SUPFAM" id="SSF56194">
    <property type="entry name" value="Uridine diphospho-N-Acetylenolpyruvylglucosamine reductase, MurB, C-terminal domain"/>
    <property type="match status" value="1"/>
</dbReference>
<dbReference type="PROSITE" id="PS51387">
    <property type="entry name" value="FAD_PCMH"/>
    <property type="match status" value="1"/>
</dbReference>
<comment type="function">
    <text evidence="1">Cell wall formation.</text>
</comment>
<comment type="catalytic activity">
    <reaction evidence="1">
        <text>UDP-N-acetyl-alpha-D-muramate + NADP(+) = UDP-N-acetyl-3-O-(1-carboxyvinyl)-alpha-D-glucosamine + NADPH + H(+)</text>
        <dbReference type="Rhea" id="RHEA:12248"/>
        <dbReference type="ChEBI" id="CHEBI:15378"/>
        <dbReference type="ChEBI" id="CHEBI:57783"/>
        <dbReference type="ChEBI" id="CHEBI:58349"/>
        <dbReference type="ChEBI" id="CHEBI:68483"/>
        <dbReference type="ChEBI" id="CHEBI:70757"/>
        <dbReference type="EC" id="1.3.1.98"/>
    </reaction>
</comment>
<comment type="cofactor">
    <cofactor evidence="1">
        <name>FAD</name>
        <dbReference type="ChEBI" id="CHEBI:57692"/>
    </cofactor>
</comment>
<comment type="pathway">
    <text evidence="1">Cell wall biogenesis; peptidoglycan biosynthesis.</text>
</comment>
<comment type="subcellular location">
    <subcellularLocation>
        <location evidence="1">Cytoplasm</location>
    </subcellularLocation>
</comment>
<comment type="similarity">
    <text evidence="1">Belongs to the MurB family.</text>
</comment>
<gene>
    <name evidence="1" type="primary">murB</name>
    <name type="ordered locus">Wbm0778</name>
</gene>
<keyword id="KW-0131">Cell cycle</keyword>
<keyword id="KW-0132">Cell division</keyword>
<keyword id="KW-0133">Cell shape</keyword>
<keyword id="KW-0961">Cell wall biogenesis/degradation</keyword>
<keyword id="KW-0963">Cytoplasm</keyword>
<keyword id="KW-0274">FAD</keyword>
<keyword id="KW-0285">Flavoprotein</keyword>
<keyword id="KW-0521">NADP</keyword>
<keyword id="KW-0560">Oxidoreductase</keyword>
<keyword id="KW-0573">Peptidoglycan synthesis</keyword>
<keyword id="KW-1185">Reference proteome</keyword>
<evidence type="ECO:0000255" key="1">
    <source>
        <dbReference type="HAMAP-Rule" id="MF_00037"/>
    </source>
</evidence>
<sequence length="295" mass="32349">MPISLPKVRGIYRYSVLMSKITWLNVGGQADILFKPRDIEDLIYLIKNTKLPISVIGATSNMIVRDSGIRGITVKLGKEFAYIKYKSNNSIIAGGAALLSNLAYFAGEQQVSGLEFLVGIPGTIGGGIEMNAGAYGSDVASVVQSIKAVNLSDGNLYEFSSKEMGYVYRGHSLKGQWIFIEAEFKGVSSGHEVILHRLKEIINKKNKSQPVRGKTAGCIFKNPRAYQAWKLIDGSGCRGLNNGGAKISKKHCNFLLNYNNATASDLENLGNKVRNTVKDKFNIELEWEIRVLGSH</sequence>
<proteinExistence type="inferred from homology"/>
<name>MURB_WOLTR</name>
<organism>
    <name type="scientific">Wolbachia sp. subsp. Brugia malayi (strain TRS)</name>
    <dbReference type="NCBI Taxonomy" id="292805"/>
    <lineage>
        <taxon>Bacteria</taxon>
        <taxon>Pseudomonadati</taxon>
        <taxon>Pseudomonadota</taxon>
        <taxon>Alphaproteobacteria</taxon>
        <taxon>Rickettsiales</taxon>
        <taxon>Anaplasmataceae</taxon>
        <taxon>Wolbachieae</taxon>
        <taxon>Wolbachia</taxon>
    </lineage>
</organism>
<accession>Q5GRK8</accession>
<reference key="1">
    <citation type="journal article" date="2005" name="PLoS Biol.">
        <title>The Wolbachia genome of Brugia malayi: endosymbiont evolution within a human pathogenic nematode.</title>
        <authorList>
            <person name="Foster J."/>
            <person name="Ganatra M."/>
            <person name="Kamal I."/>
            <person name="Ware J."/>
            <person name="Makarova K."/>
            <person name="Ivanova N."/>
            <person name="Bhattacharyya A."/>
            <person name="Kapatral V."/>
            <person name="Kumar S."/>
            <person name="Posfai J."/>
            <person name="Vincze T."/>
            <person name="Ingram J."/>
            <person name="Moran L."/>
            <person name="Lapidus A."/>
            <person name="Omelchenko M."/>
            <person name="Kyrpides N."/>
            <person name="Ghedin E."/>
            <person name="Wang S."/>
            <person name="Goltsman E."/>
            <person name="Joukov V."/>
            <person name="Ostrovskaya O."/>
            <person name="Tsukerman K."/>
            <person name="Mazur M."/>
            <person name="Comb D."/>
            <person name="Koonin E."/>
            <person name="Slatko B."/>
        </authorList>
    </citation>
    <scope>NUCLEOTIDE SEQUENCE [LARGE SCALE GENOMIC DNA]</scope>
    <source>
        <strain>TRS</strain>
    </source>
</reference>
<feature type="chain" id="PRO_0000224736" description="UDP-N-acetylenolpyruvoylglucosamine reductase">
    <location>
        <begin position="1"/>
        <end position="295"/>
    </location>
</feature>
<feature type="domain" description="FAD-binding PCMH-type" evidence="1">
    <location>
        <begin position="26"/>
        <end position="189"/>
    </location>
</feature>
<feature type="active site" evidence="1">
    <location>
        <position position="169"/>
    </location>
</feature>
<feature type="active site" description="Proton donor" evidence="1">
    <location>
        <position position="218"/>
    </location>
</feature>
<feature type="active site" evidence="1">
    <location>
        <position position="288"/>
    </location>
</feature>